<proteinExistence type="inferred from homology"/>
<feature type="chain" id="PRO_0000224817" description="1,4-dihydroxy-2-naphthoyl-CoA synthase">
    <location>
        <begin position="1"/>
        <end position="273"/>
    </location>
</feature>
<feature type="region of interest" description="Disordered" evidence="2">
    <location>
        <begin position="254"/>
        <end position="273"/>
    </location>
</feature>
<feature type="compositionally biased region" description="Basic and acidic residues" evidence="2">
    <location>
        <begin position="254"/>
        <end position="265"/>
    </location>
</feature>
<feature type="binding site" description="in other chain" evidence="1">
    <location>
        <position position="34"/>
    </location>
    <ligand>
        <name>substrate</name>
        <note>ligand shared between two neighboring subunits</note>
    </ligand>
</feature>
<feature type="binding site" description="in other chain" evidence="1">
    <location>
        <begin position="73"/>
        <end position="77"/>
    </location>
    <ligand>
        <name>substrate</name>
        <note>ligand shared between two neighboring subunits</note>
    </ligand>
</feature>
<feature type="binding site" description="in other chain" evidence="1">
    <location>
        <position position="85"/>
    </location>
    <ligand>
        <name>substrate</name>
        <note>ligand shared between two neighboring subunits</note>
    </ligand>
</feature>
<feature type="binding site" description="in other chain" evidence="1">
    <location>
        <begin position="117"/>
        <end position="121"/>
    </location>
    <ligand>
        <name>substrate</name>
        <note>ligand shared between two neighboring subunits</note>
    </ligand>
</feature>
<feature type="binding site" evidence="1">
    <location>
        <begin position="142"/>
        <end position="144"/>
    </location>
    <ligand>
        <name>hydrogencarbonate</name>
        <dbReference type="ChEBI" id="CHEBI:17544"/>
    </ligand>
</feature>
<feature type="binding site" description="in other chain" evidence="1">
    <location>
        <position position="143"/>
    </location>
    <ligand>
        <name>substrate</name>
        <note>ligand shared between two neighboring subunits</note>
    </ligand>
</feature>
<feature type="binding site" description="in other chain" evidence="1">
    <location>
        <position position="149"/>
    </location>
    <ligand>
        <name>substrate</name>
        <note>ligand shared between two neighboring subunits</note>
    </ligand>
</feature>
<feature type="binding site" evidence="1">
    <location>
        <position position="246"/>
    </location>
    <ligand>
        <name>substrate</name>
        <note>ligand shared between two neighboring subunits</note>
    </ligand>
</feature>
<feature type="binding site" evidence="1">
    <location>
        <position position="261"/>
    </location>
    <ligand>
        <name>substrate</name>
        <note>ligand shared between two neighboring subunits</note>
    </ligand>
</feature>
<feature type="site" description="Important for catalysis" evidence="1">
    <location>
        <position position="85"/>
    </location>
</feature>
<feature type="site" description="Important for catalysis" evidence="1">
    <location>
        <position position="246"/>
    </location>
</feature>
<organism>
    <name type="scientific">Staphylococcus aureus (strain MRSA252)</name>
    <dbReference type="NCBI Taxonomy" id="282458"/>
    <lineage>
        <taxon>Bacteria</taxon>
        <taxon>Bacillati</taxon>
        <taxon>Bacillota</taxon>
        <taxon>Bacilli</taxon>
        <taxon>Bacillales</taxon>
        <taxon>Staphylococcaceae</taxon>
        <taxon>Staphylococcus</taxon>
    </lineage>
</organism>
<evidence type="ECO:0000255" key="1">
    <source>
        <dbReference type="HAMAP-Rule" id="MF_01934"/>
    </source>
</evidence>
<evidence type="ECO:0000256" key="2">
    <source>
        <dbReference type="SAM" id="MobiDB-lite"/>
    </source>
</evidence>
<protein>
    <recommendedName>
        <fullName evidence="1">1,4-dihydroxy-2-naphthoyl-CoA synthase</fullName>
        <shortName evidence="1">DHNA-CoA synthase</shortName>
        <ecNumber evidence="1">4.1.3.36</ecNumber>
    </recommendedName>
</protein>
<name>MENB_STAAR</name>
<accession>Q6GI37</accession>
<gene>
    <name evidence="1" type="primary">menB</name>
    <name type="ordered locus">SAR1019</name>
</gene>
<comment type="function">
    <text evidence="1">Converts o-succinylbenzoyl-CoA (OSB-CoA) to 1,4-dihydroxy-2-naphthoyl-CoA (DHNA-CoA).</text>
</comment>
<comment type="catalytic activity">
    <reaction evidence="1">
        <text>2-succinylbenzoyl-CoA + H(+) = 1,4-dihydroxy-2-naphthoyl-CoA + H2O</text>
        <dbReference type="Rhea" id="RHEA:26562"/>
        <dbReference type="ChEBI" id="CHEBI:15377"/>
        <dbReference type="ChEBI" id="CHEBI:15378"/>
        <dbReference type="ChEBI" id="CHEBI:57364"/>
        <dbReference type="ChEBI" id="CHEBI:58897"/>
        <dbReference type="EC" id="4.1.3.36"/>
    </reaction>
</comment>
<comment type="cofactor">
    <cofactor evidence="1">
        <name>hydrogencarbonate</name>
        <dbReference type="ChEBI" id="CHEBI:17544"/>
    </cofactor>
</comment>
<comment type="pathway">
    <text evidence="1">Quinol/quinone metabolism; 1,4-dihydroxy-2-naphthoate biosynthesis; 1,4-dihydroxy-2-naphthoate from chorismate: step 6/7.</text>
</comment>
<comment type="pathway">
    <text evidence="1">Quinol/quinone metabolism; menaquinone biosynthesis.</text>
</comment>
<comment type="similarity">
    <text evidence="1">Belongs to the enoyl-CoA hydratase/isomerase family. MenB subfamily.</text>
</comment>
<dbReference type="EC" id="4.1.3.36" evidence="1"/>
<dbReference type="EMBL" id="BX571856">
    <property type="protein sequence ID" value="CAG40023.1"/>
    <property type="molecule type" value="Genomic_DNA"/>
</dbReference>
<dbReference type="RefSeq" id="WP_000184947.1">
    <property type="nucleotide sequence ID" value="NC_002952.2"/>
</dbReference>
<dbReference type="SMR" id="Q6GI37"/>
<dbReference type="KEGG" id="sar:SAR1019"/>
<dbReference type="HOGENOM" id="CLU_009834_7_7_9"/>
<dbReference type="UniPathway" id="UPA00079"/>
<dbReference type="UniPathway" id="UPA01057">
    <property type="reaction ID" value="UER00167"/>
</dbReference>
<dbReference type="Proteomes" id="UP000000596">
    <property type="component" value="Chromosome"/>
</dbReference>
<dbReference type="GO" id="GO:0005829">
    <property type="term" value="C:cytosol"/>
    <property type="evidence" value="ECO:0007669"/>
    <property type="project" value="TreeGrafter"/>
</dbReference>
<dbReference type="GO" id="GO:0008935">
    <property type="term" value="F:1,4-dihydroxy-2-naphthoyl-CoA synthase activity"/>
    <property type="evidence" value="ECO:0007669"/>
    <property type="project" value="UniProtKB-UniRule"/>
</dbReference>
<dbReference type="GO" id="GO:0009234">
    <property type="term" value="P:menaquinone biosynthetic process"/>
    <property type="evidence" value="ECO:0007669"/>
    <property type="project" value="UniProtKB-UniRule"/>
</dbReference>
<dbReference type="CDD" id="cd06558">
    <property type="entry name" value="crotonase-like"/>
    <property type="match status" value="1"/>
</dbReference>
<dbReference type="FunFam" id="1.10.12.10:FF:000003">
    <property type="entry name" value="1,4-dihydroxy-2-naphthoyl-CoA synthase"/>
    <property type="match status" value="1"/>
</dbReference>
<dbReference type="FunFam" id="3.90.226.10:FF:000003">
    <property type="entry name" value="1,4-dihydroxy-2-naphthoyl-CoA synthase"/>
    <property type="match status" value="1"/>
</dbReference>
<dbReference type="Gene3D" id="3.90.226.10">
    <property type="entry name" value="2-enoyl-CoA Hydratase, Chain A, domain 1"/>
    <property type="match status" value="1"/>
</dbReference>
<dbReference type="Gene3D" id="1.10.12.10">
    <property type="entry name" value="Lyase 2-enoyl-coa Hydratase, Chain A, domain 2"/>
    <property type="match status" value="1"/>
</dbReference>
<dbReference type="HAMAP" id="MF_01934">
    <property type="entry name" value="MenB"/>
    <property type="match status" value="1"/>
</dbReference>
<dbReference type="InterPro" id="IPR029045">
    <property type="entry name" value="ClpP/crotonase-like_dom_sf"/>
</dbReference>
<dbReference type="InterPro" id="IPR010198">
    <property type="entry name" value="DHNA-CoA_synthase_MenB"/>
</dbReference>
<dbReference type="InterPro" id="IPR001753">
    <property type="entry name" value="Enoyl-CoA_hydra/iso"/>
</dbReference>
<dbReference type="InterPro" id="IPR014748">
    <property type="entry name" value="Enoyl-CoA_hydra_C"/>
</dbReference>
<dbReference type="NCBIfam" id="TIGR01929">
    <property type="entry name" value="menB"/>
    <property type="match status" value="1"/>
</dbReference>
<dbReference type="NCBIfam" id="NF005637">
    <property type="entry name" value="PRK07396.1"/>
    <property type="match status" value="1"/>
</dbReference>
<dbReference type="PANTHER" id="PTHR43113:SF1">
    <property type="entry name" value="1,4-DIHYDROXY-2-NAPHTHOYL-COA SYNTHASE, PEROXISOMAL"/>
    <property type="match status" value="1"/>
</dbReference>
<dbReference type="PANTHER" id="PTHR43113">
    <property type="entry name" value="NUCLEOSIDE-DIPHOSPHATE-SUGAR EPIMERASE"/>
    <property type="match status" value="1"/>
</dbReference>
<dbReference type="Pfam" id="PF00378">
    <property type="entry name" value="ECH_1"/>
    <property type="match status" value="1"/>
</dbReference>
<dbReference type="SUPFAM" id="SSF52096">
    <property type="entry name" value="ClpP/crotonase"/>
    <property type="match status" value="1"/>
</dbReference>
<sequence length="273" mass="30426">MTNRQWETLREYDEIKYEFYEGIAKVTINRPEVRNAFTPKTVAEMIDAFSRARDDQNVSVIVLTGEGDLAFCSGGDQKKRGHGGYVGEDQIPRLNVLDLQRLIRIIPKPVIAMVKGYAVGGGNVLNVVCDLTIAADNAIFGQTGPKVGSFDAGYGSGYLARIVGHKKAREIWYLCRQYNAQEALDMGLVNTVVPLEKVEDETVQWCKEIMKHSPTALRFLKAAMNADTDGLAGLQQMAGDATLLYYTTDEAKEGRDAFKEKRDPDFDQFPKFP</sequence>
<keyword id="KW-0456">Lyase</keyword>
<keyword id="KW-0474">Menaquinone biosynthesis</keyword>
<reference key="1">
    <citation type="journal article" date="2004" name="Proc. Natl. Acad. Sci. U.S.A.">
        <title>Complete genomes of two clinical Staphylococcus aureus strains: evidence for the rapid evolution of virulence and drug resistance.</title>
        <authorList>
            <person name="Holden M.T.G."/>
            <person name="Feil E.J."/>
            <person name="Lindsay J.A."/>
            <person name="Peacock S.J."/>
            <person name="Day N.P.J."/>
            <person name="Enright M.C."/>
            <person name="Foster T.J."/>
            <person name="Moore C.E."/>
            <person name="Hurst L."/>
            <person name="Atkin R."/>
            <person name="Barron A."/>
            <person name="Bason N."/>
            <person name="Bentley S.D."/>
            <person name="Chillingworth C."/>
            <person name="Chillingworth T."/>
            <person name="Churcher C."/>
            <person name="Clark L."/>
            <person name="Corton C."/>
            <person name="Cronin A."/>
            <person name="Doggett J."/>
            <person name="Dowd L."/>
            <person name="Feltwell T."/>
            <person name="Hance Z."/>
            <person name="Harris B."/>
            <person name="Hauser H."/>
            <person name="Holroyd S."/>
            <person name="Jagels K."/>
            <person name="James K.D."/>
            <person name="Lennard N."/>
            <person name="Line A."/>
            <person name="Mayes R."/>
            <person name="Moule S."/>
            <person name="Mungall K."/>
            <person name="Ormond D."/>
            <person name="Quail M.A."/>
            <person name="Rabbinowitsch E."/>
            <person name="Rutherford K.M."/>
            <person name="Sanders M."/>
            <person name="Sharp S."/>
            <person name="Simmonds M."/>
            <person name="Stevens K."/>
            <person name="Whitehead S."/>
            <person name="Barrell B.G."/>
            <person name="Spratt B.G."/>
            <person name="Parkhill J."/>
        </authorList>
    </citation>
    <scope>NUCLEOTIDE SEQUENCE [LARGE SCALE GENOMIC DNA]</scope>
    <source>
        <strain>MRSA252</strain>
    </source>
</reference>